<evidence type="ECO:0000250" key="1">
    <source>
        <dbReference type="UniProtKB" id="O43402"/>
    </source>
</evidence>
<evidence type="ECO:0000255" key="2">
    <source>
        <dbReference type="PROSITE-ProRule" id="PRU01182"/>
    </source>
</evidence>
<evidence type="ECO:0000305" key="3"/>
<accession>O70378</accession>
<feature type="chain" id="PRO_0000221188" description="ER membrane protein complex subunit 8">
    <location>
        <begin position="1"/>
        <end position="207"/>
    </location>
</feature>
<feature type="domain" description="MPN" evidence="2">
    <location>
        <begin position="4"/>
        <end position="147"/>
    </location>
</feature>
<organism>
    <name type="scientific">Mus musculus</name>
    <name type="common">Mouse</name>
    <dbReference type="NCBI Taxonomy" id="10090"/>
    <lineage>
        <taxon>Eukaryota</taxon>
        <taxon>Metazoa</taxon>
        <taxon>Chordata</taxon>
        <taxon>Craniata</taxon>
        <taxon>Vertebrata</taxon>
        <taxon>Euteleostomi</taxon>
        <taxon>Mammalia</taxon>
        <taxon>Eutheria</taxon>
        <taxon>Euarchontoglires</taxon>
        <taxon>Glires</taxon>
        <taxon>Rodentia</taxon>
        <taxon>Myomorpha</taxon>
        <taxon>Muroidea</taxon>
        <taxon>Muridae</taxon>
        <taxon>Murinae</taxon>
        <taxon>Mus</taxon>
        <taxon>Mus</taxon>
    </lineage>
</organism>
<comment type="function">
    <text evidence="1">Part of the endoplasmic reticulum membrane protein complex (EMC) that enables the energy-independent insertion into endoplasmic reticulum membranes of newly synthesized membrane proteins. Preferentially accommodates proteins with transmembrane domains that are weakly hydrophobic or contain destabilizing features such as charged and aromatic residues. Involved in the cotranslational insertion of multi-pass membrane proteins in which stop-transfer membrane-anchor sequences become ER membrane spanning helices. It is also required for the post-translational insertion of tail-anchored/TA proteins in endoplasmic reticulum membranes. By mediating the proper cotranslational insertion of N-terminal transmembrane domains in an N-exo topology, with translocated N-terminus in the lumen of the ER, controls the topology of multi-pass membrane proteins like the G protein-coupled receptors. By regulating the insertion of various proteins in membranes, it is indirectly involved in many cellular processes.</text>
</comment>
<comment type="subunit">
    <text evidence="1">Component of the ER membrane protein complex (EMC). EMC8 and EMC9 are mutually exclusive subunits of the EMC complex.</text>
</comment>
<comment type="subcellular location">
    <subcellularLocation>
        <location evidence="1">Endoplasmic reticulum membrane</location>
        <topology evidence="1">Peripheral membrane protein</topology>
        <orientation evidence="1">Cytoplasmic side</orientation>
    </subcellularLocation>
</comment>
<comment type="similarity">
    <text evidence="3">Belongs to the EMC8/EMC9 family.</text>
</comment>
<reference key="1">
    <citation type="journal article" date="1999" name="Mamm. Genome">
        <title>The 5-prime region of the COX4 gene contains a novel overlapping gene, NOC4.</title>
        <authorList>
            <person name="Bachman N.J."/>
            <person name="Wu W."/>
            <person name="Schmidt T.R."/>
            <person name="Grossman L.I."/>
            <person name="Lomax M.I."/>
        </authorList>
    </citation>
    <scope>NUCLEOTIDE SEQUENCE [MRNA]</scope>
    <source>
        <strain>C57BL/6J</strain>
        <tissue>Kidney</tissue>
    </source>
</reference>
<reference key="2">
    <citation type="journal article" date="2004" name="Genome Res.">
        <title>The status, quality, and expansion of the NIH full-length cDNA project: the Mammalian Gene Collection (MGC).</title>
        <authorList>
            <consortium name="The MGC Project Team"/>
        </authorList>
    </citation>
    <scope>NUCLEOTIDE SEQUENCE [LARGE SCALE MRNA]</scope>
    <source>
        <strain>C57BL/6J</strain>
        <tissue>Mammary gland</tissue>
    </source>
</reference>
<reference key="3">
    <citation type="journal article" date="2006" name="Mol. Cell. Proteomics">
        <title>Comprehensive identification of phosphorylation sites in postsynaptic density preparations.</title>
        <authorList>
            <person name="Trinidad J.C."/>
            <person name="Specht C.G."/>
            <person name="Thalhammer A."/>
            <person name="Schoepfer R."/>
            <person name="Burlingame A.L."/>
        </authorList>
    </citation>
    <scope>IDENTIFICATION BY MASS SPECTROMETRY [LARGE SCALE ANALYSIS]</scope>
    <source>
        <tissue>Brain</tissue>
    </source>
</reference>
<reference key="4">
    <citation type="journal article" date="2010" name="Cell">
        <title>A tissue-specific atlas of mouse protein phosphorylation and expression.</title>
        <authorList>
            <person name="Huttlin E.L."/>
            <person name="Jedrychowski M.P."/>
            <person name="Elias J.E."/>
            <person name="Goswami T."/>
            <person name="Rad R."/>
            <person name="Beausoleil S.A."/>
            <person name="Villen J."/>
            <person name="Haas W."/>
            <person name="Sowa M.E."/>
            <person name="Gygi S.P."/>
        </authorList>
    </citation>
    <scope>IDENTIFICATION BY MASS SPECTROMETRY [LARGE SCALE ANALYSIS]</scope>
    <source>
        <tissue>Brain</tissue>
        <tissue>Brown adipose tissue</tissue>
        <tissue>Heart</tissue>
        <tissue>Kidney</tissue>
        <tissue>Liver</tissue>
        <tissue>Lung</tissue>
        <tissue>Pancreas</tissue>
        <tissue>Spleen</tissue>
        <tissue>Testis</tissue>
    </source>
</reference>
<protein>
    <recommendedName>
        <fullName>ER membrane protein complex subunit 8</fullName>
    </recommendedName>
    <alternativeName>
        <fullName>Neighbor of COX4</fullName>
    </alternativeName>
</protein>
<name>EMC8_MOUSE</name>
<sequence>MPGVKLTTQAYCKMVLHGAKYPHCAVNGLLVAERQRPRKEHPPGAGSHTLFVDCIPLFHGTLALTPMLEVALTLIDSWCKDNSYVIAGYYQANERVKDASPNQVAEKVASRIAEGFGDAALIMVDNAKFTMDCAAPTIHVYEQHENRWRCRDPHHDYCEDWPEAQRISASLLDSRSYETLVDFDNHLDDIRSDWTNPEINKAVLHLC</sequence>
<proteinExistence type="evidence at protein level"/>
<keyword id="KW-0256">Endoplasmic reticulum</keyword>
<keyword id="KW-0472">Membrane</keyword>
<keyword id="KW-1185">Reference proteome</keyword>
<gene>
    <name type="primary">Emc8</name>
    <name type="synonym">Cox4al</name>
    <name type="synonym">Cox4nb</name>
    <name type="synonym">Noc4</name>
</gene>
<dbReference type="EMBL" id="AF052621">
    <property type="protein sequence ID" value="AAC12933.1"/>
    <property type="molecule type" value="mRNA"/>
</dbReference>
<dbReference type="EMBL" id="BC009103">
    <property type="protein sequence ID" value="AAH09103.1"/>
    <property type="molecule type" value="mRNA"/>
</dbReference>
<dbReference type="CCDS" id="CCDS22719.1"/>
<dbReference type="RefSeq" id="NP_035056.1">
    <property type="nucleotide sequence ID" value="NM_010926.6"/>
</dbReference>
<dbReference type="SMR" id="O70378"/>
<dbReference type="BioGRID" id="201800">
    <property type="interactions" value="5"/>
</dbReference>
<dbReference type="ComplexPortal" id="CPX-5882">
    <property type="entry name" value="Endoplasmic reticulum membrane complex, EMC8 variant"/>
</dbReference>
<dbReference type="FunCoup" id="O70378">
    <property type="interactions" value="5039"/>
</dbReference>
<dbReference type="STRING" id="10090.ENSMUSP00000034277"/>
<dbReference type="GlyGen" id="O70378">
    <property type="glycosylation" value="1 site, 1 O-linked glycan (1 site)"/>
</dbReference>
<dbReference type="iPTMnet" id="O70378"/>
<dbReference type="PhosphoSitePlus" id="O70378"/>
<dbReference type="SwissPalm" id="O70378"/>
<dbReference type="jPOST" id="O70378"/>
<dbReference type="PaxDb" id="10090-ENSMUSP00000034277"/>
<dbReference type="PeptideAtlas" id="O70378"/>
<dbReference type="ProteomicsDB" id="277832"/>
<dbReference type="Pumba" id="O70378"/>
<dbReference type="Antibodypedia" id="30647">
    <property type="antibodies" value="276 antibodies from 22 providers"/>
</dbReference>
<dbReference type="DNASU" id="18117"/>
<dbReference type="Ensembl" id="ENSMUST00000034277.14">
    <property type="protein sequence ID" value="ENSMUSP00000034277.7"/>
    <property type="gene ID" value="ENSMUSG00000031819.14"/>
</dbReference>
<dbReference type="GeneID" id="18117"/>
<dbReference type="KEGG" id="mmu:18117"/>
<dbReference type="UCSC" id="uc009nrf.1">
    <property type="organism name" value="mouse"/>
</dbReference>
<dbReference type="AGR" id="MGI:1343095"/>
<dbReference type="CTD" id="10328"/>
<dbReference type="MGI" id="MGI:1343095">
    <property type="gene designation" value="Emc8"/>
</dbReference>
<dbReference type="VEuPathDB" id="HostDB:ENSMUSG00000031819"/>
<dbReference type="eggNOG" id="KOG3289">
    <property type="taxonomic scope" value="Eukaryota"/>
</dbReference>
<dbReference type="GeneTree" id="ENSGT00390000006738"/>
<dbReference type="HOGENOM" id="CLU_087337_0_1_1"/>
<dbReference type="InParanoid" id="O70378"/>
<dbReference type="OMA" id="PHCAING"/>
<dbReference type="OrthoDB" id="194468at2759"/>
<dbReference type="PhylomeDB" id="O70378"/>
<dbReference type="TreeFam" id="TF313860"/>
<dbReference type="BioGRID-ORCS" id="18117">
    <property type="hits" value="16 hits in 76 CRISPR screens"/>
</dbReference>
<dbReference type="CD-CODE" id="CE726F99">
    <property type="entry name" value="Postsynaptic density"/>
</dbReference>
<dbReference type="ChiTaRS" id="Emc8">
    <property type="organism name" value="mouse"/>
</dbReference>
<dbReference type="PRO" id="PR:O70378"/>
<dbReference type="Proteomes" id="UP000000589">
    <property type="component" value="Chromosome 8"/>
</dbReference>
<dbReference type="RNAct" id="O70378">
    <property type="molecule type" value="protein"/>
</dbReference>
<dbReference type="Bgee" id="ENSMUSG00000031819">
    <property type="expression patterns" value="Expressed in epiblast cell in embryo and 271 other cell types or tissues"/>
</dbReference>
<dbReference type="ExpressionAtlas" id="O70378">
    <property type="expression patterns" value="baseline and differential"/>
</dbReference>
<dbReference type="GO" id="GO:0005737">
    <property type="term" value="C:cytoplasm"/>
    <property type="evidence" value="ECO:0000250"/>
    <property type="project" value="UniProtKB"/>
</dbReference>
<dbReference type="GO" id="GO:0072546">
    <property type="term" value="C:EMC complex"/>
    <property type="evidence" value="ECO:0000250"/>
    <property type="project" value="UniProtKB"/>
</dbReference>
<dbReference type="GO" id="GO:0005789">
    <property type="term" value="C:endoplasmic reticulum membrane"/>
    <property type="evidence" value="ECO:0000303"/>
    <property type="project" value="ComplexPortal"/>
</dbReference>
<dbReference type="GO" id="GO:0005794">
    <property type="term" value="C:Golgi apparatus"/>
    <property type="evidence" value="ECO:0007669"/>
    <property type="project" value="Ensembl"/>
</dbReference>
<dbReference type="GO" id="GO:0005739">
    <property type="term" value="C:mitochondrion"/>
    <property type="evidence" value="ECO:0007005"/>
    <property type="project" value="MGI"/>
</dbReference>
<dbReference type="GO" id="GO:0032977">
    <property type="term" value="F:membrane insertase activity"/>
    <property type="evidence" value="ECO:0007669"/>
    <property type="project" value="Ensembl"/>
</dbReference>
<dbReference type="GO" id="GO:0045050">
    <property type="term" value="P:protein insertion into ER membrane by stop-transfer membrane-anchor sequence"/>
    <property type="evidence" value="ECO:0000250"/>
    <property type="project" value="UniProtKB"/>
</dbReference>
<dbReference type="GO" id="GO:0071816">
    <property type="term" value="P:tail-anchored membrane protein insertion into ER membrane"/>
    <property type="evidence" value="ECO:0000250"/>
    <property type="project" value="UniProtKB"/>
</dbReference>
<dbReference type="CDD" id="cd08060">
    <property type="entry name" value="MPN_UPF0172"/>
    <property type="match status" value="1"/>
</dbReference>
<dbReference type="InterPro" id="IPR005366">
    <property type="entry name" value="EMC8/9"/>
</dbReference>
<dbReference type="InterPro" id="IPR037518">
    <property type="entry name" value="MPN"/>
</dbReference>
<dbReference type="PANTHER" id="PTHR12941">
    <property type="entry name" value="ER MEMBRANE PROTEIN COMPLEX"/>
    <property type="match status" value="1"/>
</dbReference>
<dbReference type="PANTHER" id="PTHR12941:SF13">
    <property type="entry name" value="ER MEMBRANE PROTEIN COMPLEX SUBUNIT 8"/>
    <property type="match status" value="1"/>
</dbReference>
<dbReference type="Pfam" id="PF03665">
    <property type="entry name" value="UPF0172"/>
    <property type="match status" value="1"/>
</dbReference>
<dbReference type="PROSITE" id="PS50249">
    <property type="entry name" value="MPN"/>
    <property type="match status" value="1"/>
</dbReference>